<keyword id="KW-0227">DNA damage</keyword>
<keyword id="KW-0234">DNA repair</keyword>
<protein>
    <recommendedName>
        <fullName evidence="1">DNA mismatch repair protein MutL</fullName>
    </recommendedName>
</protein>
<sequence>MAIEKLPPQLANQIAAGEVVERPASVIKELVENSLDAGATRVDIEIDKGGSKLIRIRDNGFGIPKQDLSLALSRHATSKLKSLDDLEAIMSFGFRGEALASISSVSRLTLTSRTETQAEAWQAKAEGTEMAVQILPAAHPVGTTIEAVDLFFNTPARRRFLKSDKTEFTHIDEWLKRIALVRRDIHFTLKHNGKSVRNYRPAMTEIQYLQRLGQVCGKAFAETCLHISCSHNDLTLSGYLQAPGAASGYCETQYFYVNGRLVKDRLVNHAVRQAFSEYAAGVSPGYVLMLELDPHQVDVNVHPAKHEVRFHQSRYVHDYILQALQSAMAQSSELGLEAQPEPTDESGAAFESNSTNSNVSSTSYSEPNTKPVAVNERPLTTTATSYNQGQSSYRTPLRPATHRADVELPSQSSLEAYASLLSRSSAEPASGKVVSNPHASAVSDASVKMPAVLADKYWVIVEEDSIRLLSIADVIKETARQQIQAKLAQGLVGQPLLMPVAVPVDDNWNEVIETREILLRKLGIELSIRLGQLIIKKVPPYLRDSQLAVLIPELLQWIRFEEPSDDALVHWLTTQASSRFTASAEAWLAFSTLDSSAKSALYNQSQELPWQQWMKESQSD</sequence>
<organism>
    <name type="scientific">Shewanella piezotolerans (strain WP3 / JCM 13877)</name>
    <dbReference type="NCBI Taxonomy" id="225849"/>
    <lineage>
        <taxon>Bacteria</taxon>
        <taxon>Pseudomonadati</taxon>
        <taxon>Pseudomonadota</taxon>
        <taxon>Gammaproteobacteria</taxon>
        <taxon>Alteromonadales</taxon>
        <taxon>Shewanellaceae</taxon>
        <taxon>Shewanella</taxon>
    </lineage>
</organism>
<dbReference type="EMBL" id="CP000472">
    <property type="protein sequence ID" value="ACJ27599.1"/>
    <property type="molecule type" value="Genomic_DNA"/>
</dbReference>
<dbReference type="RefSeq" id="WP_020910978.1">
    <property type="nucleotide sequence ID" value="NC_011566.1"/>
</dbReference>
<dbReference type="SMR" id="B8CIX3"/>
<dbReference type="STRING" id="225849.swp_0786"/>
<dbReference type="KEGG" id="swp:swp_0786"/>
<dbReference type="eggNOG" id="COG0323">
    <property type="taxonomic scope" value="Bacteria"/>
</dbReference>
<dbReference type="HOGENOM" id="CLU_004131_4_2_6"/>
<dbReference type="OrthoDB" id="9763467at2"/>
<dbReference type="Proteomes" id="UP000000753">
    <property type="component" value="Chromosome"/>
</dbReference>
<dbReference type="GO" id="GO:0032300">
    <property type="term" value="C:mismatch repair complex"/>
    <property type="evidence" value="ECO:0007669"/>
    <property type="project" value="InterPro"/>
</dbReference>
<dbReference type="GO" id="GO:0005524">
    <property type="term" value="F:ATP binding"/>
    <property type="evidence" value="ECO:0007669"/>
    <property type="project" value="InterPro"/>
</dbReference>
<dbReference type="GO" id="GO:0016887">
    <property type="term" value="F:ATP hydrolysis activity"/>
    <property type="evidence" value="ECO:0007669"/>
    <property type="project" value="InterPro"/>
</dbReference>
<dbReference type="GO" id="GO:0140664">
    <property type="term" value="F:ATP-dependent DNA damage sensor activity"/>
    <property type="evidence" value="ECO:0007669"/>
    <property type="project" value="InterPro"/>
</dbReference>
<dbReference type="GO" id="GO:0030983">
    <property type="term" value="F:mismatched DNA binding"/>
    <property type="evidence" value="ECO:0007669"/>
    <property type="project" value="InterPro"/>
</dbReference>
<dbReference type="GO" id="GO:0006298">
    <property type="term" value="P:mismatch repair"/>
    <property type="evidence" value="ECO:0007669"/>
    <property type="project" value="UniProtKB-UniRule"/>
</dbReference>
<dbReference type="CDD" id="cd16926">
    <property type="entry name" value="HATPase_MutL-MLH-PMS-like"/>
    <property type="match status" value="1"/>
</dbReference>
<dbReference type="CDD" id="cd03482">
    <property type="entry name" value="MutL_Trans_MutL"/>
    <property type="match status" value="1"/>
</dbReference>
<dbReference type="FunFam" id="3.30.565.10:FF:000003">
    <property type="entry name" value="DNA mismatch repair endonuclease MutL"/>
    <property type="match status" value="1"/>
</dbReference>
<dbReference type="Gene3D" id="3.30.230.10">
    <property type="match status" value="1"/>
</dbReference>
<dbReference type="Gene3D" id="3.30.565.10">
    <property type="entry name" value="Histidine kinase-like ATPase, C-terminal domain"/>
    <property type="match status" value="1"/>
</dbReference>
<dbReference type="Gene3D" id="3.30.1370.100">
    <property type="entry name" value="MutL, C-terminal domain, regulatory subdomain"/>
    <property type="match status" value="1"/>
</dbReference>
<dbReference type="HAMAP" id="MF_00149">
    <property type="entry name" value="DNA_mis_repair"/>
    <property type="match status" value="1"/>
</dbReference>
<dbReference type="InterPro" id="IPR014762">
    <property type="entry name" value="DNA_mismatch_repair_CS"/>
</dbReference>
<dbReference type="InterPro" id="IPR020667">
    <property type="entry name" value="DNA_mismatch_repair_MutL"/>
</dbReference>
<dbReference type="InterPro" id="IPR013507">
    <property type="entry name" value="DNA_mismatch_S5_2-like"/>
</dbReference>
<dbReference type="InterPro" id="IPR036890">
    <property type="entry name" value="HATPase_C_sf"/>
</dbReference>
<dbReference type="InterPro" id="IPR002099">
    <property type="entry name" value="MutL/Mlh/PMS"/>
</dbReference>
<dbReference type="InterPro" id="IPR038973">
    <property type="entry name" value="MutL/Mlh/Pms-like"/>
</dbReference>
<dbReference type="InterPro" id="IPR014790">
    <property type="entry name" value="MutL_C"/>
</dbReference>
<dbReference type="InterPro" id="IPR042121">
    <property type="entry name" value="MutL_C_regsub"/>
</dbReference>
<dbReference type="InterPro" id="IPR037198">
    <property type="entry name" value="MutL_C_sf"/>
</dbReference>
<dbReference type="InterPro" id="IPR020568">
    <property type="entry name" value="Ribosomal_Su5_D2-typ_SF"/>
</dbReference>
<dbReference type="InterPro" id="IPR014721">
    <property type="entry name" value="Ribsml_uS5_D2-typ_fold_subgr"/>
</dbReference>
<dbReference type="NCBIfam" id="TIGR00585">
    <property type="entry name" value="mutl"/>
    <property type="match status" value="1"/>
</dbReference>
<dbReference type="NCBIfam" id="NF000948">
    <property type="entry name" value="PRK00095.1-1"/>
    <property type="match status" value="1"/>
</dbReference>
<dbReference type="PANTHER" id="PTHR10073">
    <property type="entry name" value="DNA MISMATCH REPAIR PROTEIN MLH, PMS, MUTL"/>
    <property type="match status" value="1"/>
</dbReference>
<dbReference type="PANTHER" id="PTHR10073:SF12">
    <property type="entry name" value="DNA MISMATCH REPAIR PROTEIN MLH1"/>
    <property type="match status" value="1"/>
</dbReference>
<dbReference type="Pfam" id="PF01119">
    <property type="entry name" value="DNA_mis_repair"/>
    <property type="match status" value="1"/>
</dbReference>
<dbReference type="Pfam" id="PF13589">
    <property type="entry name" value="HATPase_c_3"/>
    <property type="match status" value="1"/>
</dbReference>
<dbReference type="Pfam" id="PF08676">
    <property type="entry name" value="MutL_C"/>
    <property type="match status" value="1"/>
</dbReference>
<dbReference type="SMART" id="SM01340">
    <property type="entry name" value="DNA_mis_repair"/>
    <property type="match status" value="1"/>
</dbReference>
<dbReference type="SMART" id="SM00853">
    <property type="entry name" value="MutL_C"/>
    <property type="match status" value="1"/>
</dbReference>
<dbReference type="SUPFAM" id="SSF55874">
    <property type="entry name" value="ATPase domain of HSP90 chaperone/DNA topoisomerase II/histidine kinase"/>
    <property type="match status" value="1"/>
</dbReference>
<dbReference type="SUPFAM" id="SSF118116">
    <property type="entry name" value="DNA mismatch repair protein MutL"/>
    <property type="match status" value="1"/>
</dbReference>
<dbReference type="SUPFAM" id="SSF54211">
    <property type="entry name" value="Ribosomal protein S5 domain 2-like"/>
    <property type="match status" value="1"/>
</dbReference>
<dbReference type="PROSITE" id="PS00058">
    <property type="entry name" value="DNA_MISMATCH_REPAIR_1"/>
    <property type="match status" value="1"/>
</dbReference>
<proteinExistence type="inferred from homology"/>
<evidence type="ECO:0000255" key="1">
    <source>
        <dbReference type="HAMAP-Rule" id="MF_00149"/>
    </source>
</evidence>
<evidence type="ECO:0000256" key="2">
    <source>
        <dbReference type="SAM" id="MobiDB-lite"/>
    </source>
</evidence>
<gene>
    <name evidence="1" type="primary">mutL</name>
    <name type="ordered locus">swp_0786</name>
</gene>
<feature type="chain" id="PRO_1000192182" description="DNA mismatch repair protein MutL">
    <location>
        <begin position="1"/>
        <end position="620"/>
    </location>
</feature>
<feature type="region of interest" description="Disordered" evidence="2">
    <location>
        <begin position="332"/>
        <end position="402"/>
    </location>
</feature>
<feature type="compositionally biased region" description="Low complexity" evidence="2">
    <location>
        <begin position="352"/>
        <end position="365"/>
    </location>
</feature>
<feature type="compositionally biased region" description="Polar residues" evidence="2">
    <location>
        <begin position="378"/>
        <end position="394"/>
    </location>
</feature>
<comment type="function">
    <text evidence="1">This protein is involved in the repair of mismatches in DNA. It is required for dam-dependent methyl-directed DNA mismatch repair. May act as a 'molecular matchmaker', a protein that promotes the formation of a stable complex between two or more DNA-binding proteins in an ATP-dependent manner without itself being part of a final effector complex.</text>
</comment>
<comment type="similarity">
    <text evidence="1">Belongs to the DNA mismatch repair MutL/HexB family.</text>
</comment>
<reference key="1">
    <citation type="journal article" date="2008" name="PLoS ONE">
        <title>Environmental adaptation: genomic analysis of the piezotolerant and psychrotolerant deep-sea iron reducing bacterium Shewanella piezotolerans WP3.</title>
        <authorList>
            <person name="Wang F."/>
            <person name="Wang J."/>
            <person name="Jian H."/>
            <person name="Zhang B."/>
            <person name="Li S."/>
            <person name="Wang F."/>
            <person name="Zeng X."/>
            <person name="Gao L."/>
            <person name="Bartlett D.H."/>
            <person name="Yu J."/>
            <person name="Hu S."/>
            <person name="Xiao X."/>
        </authorList>
    </citation>
    <scope>NUCLEOTIDE SEQUENCE [LARGE SCALE GENOMIC DNA]</scope>
    <source>
        <strain>WP3 / JCM 13877</strain>
    </source>
</reference>
<accession>B8CIX3</accession>
<name>MUTL_SHEPW</name>